<dbReference type="EC" id="6.3.4.20" evidence="1"/>
<dbReference type="EMBL" id="AM260479">
    <property type="protein sequence ID" value="CAJ93903.1"/>
    <property type="molecule type" value="Genomic_DNA"/>
</dbReference>
<dbReference type="RefSeq" id="WP_011615849.1">
    <property type="nucleotide sequence ID" value="NC_008313.1"/>
</dbReference>
<dbReference type="SMR" id="Q0K7W8"/>
<dbReference type="STRING" id="381666.H16_A2826"/>
<dbReference type="KEGG" id="reh:H16_A2826"/>
<dbReference type="PATRIC" id="fig|381666.6.peg.3225"/>
<dbReference type="eggNOG" id="COG0603">
    <property type="taxonomic scope" value="Bacteria"/>
</dbReference>
<dbReference type="HOGENOM" id="CLU_081854_1_1_4"/>
<dbReference type="OrthoDB" id="9789567at2"/>
<dbReference type="UniPathway" id="UPA00391"/>
<dbReference type="Proteomes" id="UP000008210">
    <property type="component" value="Chromosome 1"/>
</dbReference>
<dbReference type="GO" id="GO:0005524">
    <property type="term" value="F:ATP binding"/>
    <property type="evidence" value="ECO:0007669"/>
    <property type="project" value="UniProtKB-UniRule"/>
</dbReference>
<dbReference type="GO" id="GO:0016879">
    <property type="term" value="F:ligase activity, forming carbon-nitrogen bonds"/>
    <property type="evidence" value="ECO:0007669"/>
    <property type="project" value="UniProtKB-UniRule"/>
</dbReference>
<dbReference type="GO" id="GO:0008270">
    <property type="term" value="F:zinc ion binding"/>
    <property type="evidence" value="ECO:0007669"/>
    <property type="project" value="UniProtKB-UniRule"/>
</dbReference>
<dbReference type="GO" id="GO:0008616">
    <property type="term" value="P:queuosine biosynthetic process"/>
    <property type="evidence" value="ECO:0007669"/>
    <property type="project" value="UniProtKB-UniRule"/>
</dbReference>
<dbReference type="CDD" id="cd01995">
    <property type="entry name" value="QueC-like"/>
    <property type="match status" value="1"/>
</dbReference>
<dbReference type="FunFam" id="3.40.50.620:FF:000131">
    <property type="entry name" value="7-cyano-7-deazaguanine synthase"/>
    <property type="match status" value="1"/>
</dbReference>
<dbReference type="Gene3D" id="3.40.50.620">
    <property type="entry name" value="HUPs"/>
    <property type="match status" value="1"/>
</dbReference>
<dbReference type="HAMAP" id="MF_01633">
    <property type="entry name" value="QueC"/>
    <property type="match status" value="1"/>
</dbReference>
<dbReference type="InterPro" id="IPR018317">
    <property type="entry name" value="QueC"/>
</dbReference>
<dbReference type="InterPro" id="IPR014729">
    <property type="entry name" value="Rossmann-like_a/b/a_fold"/>
</dbReference>
<dbReference type="NCBIfam" id="TIGR00364">
    <property type="entry name" value="7-cyano-7-deazaguanine synthase QueC"/>
    <property type="match status" value="1"/>
</dbReference>
<dbReference type="PANTHER" id="PTHR42914">
    <property type="entry name" value="7-CYANO-7-DEAZAGUANINE SYNTHASE"/>
    <property type="match status" value="1"/>
</dbReference>
<dbReference type="PANTHER" id="PTHR42914:SF1">
    <property type="entry name" value="7-CYANO-7-DEAZAGUANINE SYNTHASE"/>
    <property type="match status" value="1"/>
</dbReference>
<dbReference type="Pfam" id="PF06508">
    <property type="entry name" value="QueC"/>
    <property type="match status" value="1"/>
</dbReference>
<dbReference type="PIRSF" id="PIRSF006293">
    <property type="entry name" value="ExsB"/>
    <property type="match status" value="1"/>
</dbReference>
<dbReference type="SUPFAM" id="SSF52402">
    <property type="entry name" value="Adenine nucleotide alpha hydrolases-like"/>
    <property type="match status" value="1"/>
</dbReference>
<proteinExistence type="inferred from homology"/>
<organism>
    <name type="scientific">Cupriavidus necator (strain ATCC 17699 / DSM 428 / KCTC 22496 / NCIMB 10442 / H16 / Stanier 337)</name>
    <name type="common">Ralstonia eutropha</name>
    <dbReference type="NCBI Taxonomy" id="381666"/>
    <lineage>
        <taxon>Bacteria</taxon>
        <taxon>Pseudomonadati</taxon>
        <taxon>Pseudomonadota</taxon>
        <taxon>Betaproteobacteria</taxon>
        <taxon>Burkholderiales</taxon>
        <taxon>Burkholderiaceae</taxon>
        <taxon>Cupriavidus</taxon>
    </lineage>
</organism>
<gene>
    <name evidence="1" type="primary">queC</name>
    <name type="ordered locus">H16_A2826</name>
</gene>
<comment type="function">
    <text evidence="1">Catalyzes the ATP-dependent conversion of 7-carboxy-7-deazaguanine (CDG) to 7-cyano-7-deazaguanine (preQ(0)).</text>
</comment>
<comment type="catalytic activity">
    <reaction evidence="1">
        <text>7-carboxy-7-deazaguanine + NH4(+) + ATP = 7-cyano-7-deazaguanine + ADP + phosphate + H2O + H(+)</text>
        <dbReference type="Rhea" id="RHEA:27982"/>
        <dbReference type="ChEBI" id="CHEBI:15377"/>
        <dbReference type="ChEBI" id="CHEBI:15378"/>
        <dbReference type="ChEBI" id="CHEBI:28938"/>
        <dbReference type="ChEBI" id="CHEBI:30616"/>
        <dbReference type="ChEBI" id="CHEBI:43474"/>
        <dbReference type="ChEBI" id="CHEBI:45075"/>
        <dbReference type="ChEBI" id="CHEBI:61036"/>
        <dbReference type="ChEBI" id="CHEBI:456216"/>
        <dbReference type="EC" id="6.3.4.20"/>
    </reaction>
</comment>
<comment type="cofactor">
    <cofactor evidence="1">
        <name>Zn(2+)</name>
        <dbReference type="ChEBI" id="CHEBI:29105"/>
    </cofactor>
    <text evidence="1">Binds 1 zinc ion per subunit.</text>
</comment>
<comment type="pathway">
    <text evidence="1">Purine metabolism; 7-cyano-7-deazaguanine biosynthesis.</text>
</comment>
<comment type="similarity">
    <text evidence="1">Belongs to the QueC family.</text>
</comment>
<evidence type="ECO:0000255" key="1">
    <source>
        <dbReference type="HAMAP-Rule" id="MF_01633"/>
    </source>
</evidence>
<keyword id="KW-0067">ATP-binding</keyword>
<keyword id="KW-0436">Ligase</keyword>
<keyword id="KW-0479">Metal-binding</keyword>
<keyword id="KW-0547">Nucleotide-binding</keyword>
<keyword id="KW-0671">Queuosine biosynthesis</keyword>
<keyword id="KW-1185">Reference proteome</keyword>
<keyword id="KW-0862">Zinc</keyword>
<accession>Q0K7W8</accession>
<sequence>MTKRAIVLLSGGLDSATVLAMARAQGFETYALSMRYGQRHSSELEAARRVAAALGATRHEIIDLDLRRFGGSALTDDALAVPTDGASDGIPVTYVPARNTIMLSLALGWAEAVGGRDLFFGANAVDYSGYPDCRPEYVAAYETLANLATKAGVEGDRFRVHAPIIDMTKGEIIRAGIALGVDYSLTVSCYQADDDGRACGVCDSCRIRRAGFEAAGVPDPTRYQAAA</sequence>
<feature type="chain" id="PRO_1000069791" description="7-cyano-7-deazaguanine synthase">
    <location>
        <begin position="1"/>
        <end position="227"/>
    </location>
</feature>
<feature type="binding site" evidence="1">
    <location>
        <begin position="9"/>
        <end position="19"/>
    </location>
    <ligand>
        <name>ATP</name>
        <dbReference type="ChEBI" id="CHEBI:30616"/>
    </ligand>
</feature>
<feature type="binding site" evidence="1">
    <location>
        <position position="189"/>
    </location>
    <ligand>
        <name>Zn(2+)</name>
        <dbReference type="ChEBI" id="CHEBI:29105"/>
    </ligand>
</feature>
<feature type="binding site" evidence="1">
    <location>
        <position position="199"/>
    </location>
    <ligand>
        <name>Zn(2+)</name>
        <dbReference type="ChEBI" id="CHEBI:29105"/>
    </ligand>
</feature>
<feature type="binding site" evidence="1">
    <location>
        <position position="202"/>
    </location>
    <ligand>
        <name>Zn(2+)</name>
        <dbReference type="ChEBI" id="CHEBI:29105"/>
    </ligand>
</feature>
<feature type="binding site" evidence="1">
    <location>
        <position position="205"/>
    </location>
    <ligand>
        <name>Zn(2+)</name>
        <dbReference type="ChEBI" id="CHEBI:29105"/>
    </ligand>
</feature>
<protein>
    <recommendedName>
        <fullName evidence="1">7-cyano-7-deazaguanine synthase</fullName>
        <ecNumber evidence="1">6.3.4.20</ecNumber>
    </recommendedName>
    <alternativeName>
        <fullName evidence="1">7-cyano-7-carbaguanine synthase</fullName>
    </alternativeName>
    <alternativeName>
        <fullName evidence="1">PreQ(0) synthase</fullName>
    </alternativeName>
    <alternativeName>
        <fullName evidence="1">Queuosine biosynthesis protein QueC</fullName>
    </alternativeName>
</protein>
<reference key="1">
    <citation type="journal article" date="2006" name="Nat. Biotechnol.">
        <title>Genome sequence of the bioplastic-producing 'Knallgas' bacterium Ralstonia eutropha H16.</title>
        <authorList>
            <person name="Pohlmann A."/>
            <person name="Fricke W.F."/>
            <person name="Reinecke F."/>
            <person name="Kusian B."/>
            <person name="Liesegang H."/>
            <person name="Cramm R."/>
            <person name="Eitinger T."/>
            <person name="Ewering C."/>
            <person name="Poetter M."/>
            <person name="Schwartz E."/>
            <person name="Strittmatter A."/>
            <person name="Voss I."/>
            <person name="Gottschalk G."/>
            <person name="Steinbuechel A."/>
            <person name="Friedrich B."/>
            <person name="Bowien B."/>
        </authorList>
    </citation>
    <scope>NUCLEOTIDE SEQUENCE [LARGE SCALE GENOMIC DNA]</scope>
    <source>
        <strain>ATCC 17699 / DSM 428 / KCTC 22496 / NCIMB 10442 / H16 / Stanier 337</strain>
    </source>
</reference>
<name>QUEC_CUPNH</name>